<sequence length="108" mass="12445">MTSIIYSPKDIFEQEFKTSMRGFDKKEVDEFLDNVIKDYENFNAQIEALKAENEALKKAKFQARNTVSATVQQPVPQPTRVAQSATNFDILKRISKLEKEVFGKQIIE</sequence>
<proteinExistence type="inferred from homology"/>
<keyword id="KW-0131">Cell cycle</keyword>
<keyword id="KW-0132">Cell division</keyword>
<keyword id="KW-0133">Cell shape</keyword>
<keyword id="KW-0175">Coiled coil</keyword>
<keyword id="KW-0963">Cytoplasm</keyword>
<accession>A2RD56</accession>
<reference key="1">
    <citation type="journal article" date="2007" name="J. Bacteriol.">
        <title>Complete genome of acute rheumatic fever-associated serotype M5 Streptococcus pyogenes strain Manfredo.</title>
        <authorList>
            <person name="Holden M.T.G."/>
            <person name="Scott A."/>
            <person name="Cherevach I."/>
            <person name="Chillingworth T."/>
            <person name="Churcher C."/>
            <person name="Cronin A."/>
            <person name="Dowd L."/>
            <person name="Feltwell T."/>
            <person name="Hamlin N."/>
            <person name="Holroyd S."/>
            <person name="Jagels K."/>
            <person name="Moule S."/>
            <person name="Mungall K."/>
            <person name="Quail M.A."/>
            <person name="Price C."/>
            <person name="Rabbinowitsch E."/>
            <person name="Sharp S."/>
            <person name="Skelton J."/>
            <person name="Whitehead S."/>
            <person name="Barrell B.G."/>
            <person name="Kehoe M."/>
            <person name="Parkhill J."/>
        </authorList>
    </citation>
    <scope>NUCLEOTIDE SEQUENCE [LARGE SCALE GENOMIC DNA]</scope>
    <source>
        <strain>Manfredo</strain>
    </source>
</reference>
<organism>
    <name type="scientific">Streptococcus pyogenes serotype M5 (strain Manfredo)</name>
    <dbReference type="NCBI Taxonomy" id="160491"/>
    <lineage>
        <taxon>Bacteria</taxon>
        <taxon>Bacillati</taxon>
        <taxon>Bacillota</taxon>
        <taxon>Bacilli</taxon>
        <taxon>Lactobacillales</taxon>
        <taxon>Streptococcaceae</taxon>
        <taxon>Streptococcus</taxon>
    </lineage>
</organism>
<dbReference type="EMBL" id="AM295007">
    <property type="protein sequence ID" value="CAM29781.1"/>
    <property type="molecule type" value="Genomic_DNA"/>
</dbReference>
<dbReference type="RefSeq" id="WP_002983626.1">
    <property type="nucleotide sequence ID" value="NC_009332.1"/>
</dbReference>
<dbReference type="SMR" id="A2RD56"/>
<dbReference type="GeneID" id="69900485"/>
<dbReference type="KEGG" id="spf:SpyM50439"/>
<dbReference type="HOGENOM" id="CLU_140309_1_0_9"/>
<dbReference type="GO" id="GO:0005737">
    <property type="term" value="C:cytoplasm"/>
    <property type="evidence" value="ECO:0007669"/>
    <property type="project" value="UniProtKB-SubCell"/>
</dbReference>
<dbReference type="GO" id="GO:0051301">
    <property type="term" value="P:cell division"/>
    <property type="evidence" value="ECO:0007669"/>
    <property type="project" value="UniProtKB-UniRule"/>
</dbReference>
<dbReference type="GO" id="GO:0008360">
    <property type="term" value="P:regulation of cell shape"/>
    <property type="evidence" value="ECO:0007669"/>
    <property type="project" value="UniProtKB-UniRule"/>
</dbReference>
<dbReference type="Gene3D" id="6.10.250.660">
    <property type="match status" value="1"/>
</dbReference>
<dbReference type="HAMAP" id="MF_02011">
    <property type="entry name" value="GpsB"/>
    <property type="match status" value="1"/>
</dbReference>
<dbReference type="InterPro" id="IPR011229">
    <property type="entry name" value="Cell_cycle_GpsB"/>
</dbReference>
<dbReference type="InterPro" id="IPR019933">
    <property type="entry name" value="DivIVA_domain"/>
</dbReference>
<dbReference type="InterPro" id="IPR007793">
    <property type="entry name" value="DivIVA_fam"/>
</dbReference>
<dbReference type="NCBIfam" id="TIGR03544">
    <property type="entry name" value="DivI1A_domain"/>
    <property type="match status" value="1"/>
</dbReference>
<dbReference type="NCBIfam" id="NF010725">
    <property type="entry name" value="PRK14127.1"/>
    <property type="match status" value="1"/>
</dbReference>
<dbReference type="PANTHER" id="PTHR35794:SF1">
    <property type="entry name" value="CELL CYCLE PROTEIN GPSB"/>
    <property type="match status" value="1"/>
</dbReference>
<dbReference type="PANTHER" id="PTHR35794">
    <property type="entry name" value="CELL DIVISION PROTEIN DIVIVA"/>
    <property type="match status" value="1"/>
</dbReference>
<dbReference type="Pfam" id="PF05103">
    <property type="entry name" value="DivIVA"/>
    <property type="match status" value="1"/>
</dbReference>
<dbReference type="PIRSF" id="PIRSF029938">
    <property type="entry name" value="UCP029938"/>
    <property type="match status" value="1"/>
</dbReference>
<protein>
    <recommendedName>
        <fullName evidence="1">Cell cycle protein GpsB</fullName>
    </recommendedName>
    <alternativeName>
        <fullName evidence="1">Guiding PBP1-shuttling protein</fullName>
    </alternativeName>
</protein>
<evidence type="ECO:0000255" key="1">
    <source>
        <dbReference type="HAMAP-Rule" id="MF_02011"/>
    </source>
</evidence>
<gene>
    <name evidence="1" type="primary">gpsB</name>
    <name type="ordered locus">SpyM50439</name>
</gene>
<name>GPSB_STRPG</name>
<feature type="chain" id="PRO_0000337964" description="Cell cycle protein GpsB">
    <location>
        <begin position="1"/>
        <end position="108"/>
    </location>
</feature>
<feature type="coiled-coil region" evidence="1">
    <location>
        <begin position="32"/>
        <end position="69"/>
    </location>
</feature>
<comment type="function">
    <text evidence="1">Divisome component that associates with the complex late in its assembly, after the Z-ring is formed, and is dependent on DivIC and PBP2B for its recruitment to the divisome. Together with EzrA, is a key component of the system that regulates PBP1 localization during cell cycle progression. Its main role could be the removal of PBP1 from the cell pole after pole maturation is completed. Also contributes to the recruitment of PBP1 to the division complex. Not essential for septum formation.</text>
</comment>
<comment type="subunit">
    <text evidence="1">Forms polymers through the coiled coil domains. Interacts with PBP1, MreC and EzrA.</text>
</comment>
<comment type="subcellular location">
    <subcellularLocation>
        <location evidence="1">Cytoplasm</location>
    </subcellularLocation>
    <text evidence="1">Shuttles between the lateral wall and the division site in a cell cycle-dependent manner.</text>
</comment>
<comment type="similarity">
    <text evidence="1">Belongs to the GpsB family.</text>
</comment>